<feature type="chain" id="PRO_0000387004" description="Ribosomal RNA small subunit methyltransferase H">
    <location>
        <begin position="1"/>
        <end position="318"/>
    </location>
</feature>
<feature type="binding site" evidence="1">
    <location>
        <begin position="37"/>
        <end position="39"/>
    </location>
    <ligand>
        <name>S-adenosyl-L-methionine</name>
        <dbReference type="ChEBI" id="CHEBI:59789"/>
    </ligand>
</feature>
<feature type="binding site" evidence="1">
    <location>
        <position position="57"/>
    </location>
    <ligand>
        <name>S-adenosyl-L-methionine</name>
        <dbReference type="ChEBI" id="CHEBI:59789"/>
    </ligand>
</feature>
<feature type="binding site" evidence="1">
    <location>
        <position position="83"/>
    </location>
    <ligand>
        <name>S-adenosyl-L-methionine</name>
        <dbReference type="ChEBI" id="CHEBI:59789"/>
    </ligand>
</feature>
<feature type="binding site" evidence="1">
    <location>
        <position position="104"/>
    </location>
    <ligand>
        <name>S-adenosyl-L-methionine</name>
        <dbReference type="ChEBI" id="CHEBI:59789"/>
    </ligand>
</feature>
<feature type="binding site" evidence="1">
    <location>
        <position position="111"/>
    </location>
    <ligand>
        <name>S-adenosyl-L-methionine</name>
        <dbReference type="ChEBI" id="CHEBI:59789"/>
    </ligand>
</feature>
<organism>
    <name type="scientific">Neisseria gonorrhoeae (strain NCCP11945)</name>
    <dbReference type="NCBI Taxonomy" id="521006"/>
    <lineage>
        <taxon>Bacteria</taxon>
        <taxon>Pseudomonadati</taxon>
        <taxon>Pseudomonadota</taxon>
        <taxon>Betaproteobacteria</taxon>
        <taxon>Neisseriales</taxon>
        <taxon>Neisseriaceae</taxon>
        <taxon>Neisseria</taxon>
    </lineage>
</organism>
<accession>B4RQD7</accession>
<proteinExistence type="inferred from homology"/>
<dbReference type="EC" id="2.1.1.199" evidence="1"/>
<dbReference type="EMBL" id="CP001050">
    <property type="protein sequence ID" value="ACF30473.1"/>
    <property type="status" value="ALT_INIT"/>
    <property type="molecule type" value="Genomic_DNA"/>
</dbReference>
<dbReference type="RefSeq" id="WP_003689462.1">
    <property type="nucleotide sequence ID" value="NC_011035.1"/>
</dbReference>
<dbReference type="SMR" id="B4RQD7"/>
<dbReference type="GeneID" id="66753750"/>
<dbReference type="KEGG" id="ngk:NGK_1834"/>
<dbReference type="HOGENOM" id="CLU_038422_2_0_4"/>
<dbReference type="Proteomes" id="UP000002564">
    <property type="component" value="Chromosome"/>
</dbReference>
<dbReference type="GO" id="GO:0005737">
    <property type="term" value="C:cytoplasm"/>
    <property type="evidence" value="ECO:0007669"/>
    <property type="project" value="UniProtKB-SubCell"/>
</dbReference>
<dbReference type="GO" id="GO:0071424">
    <property type="term" value="F:rRNA (cytosine-N4-)-methyltransferase activity"/>
    <property type="evidence" value="ECO:0007669"/>
    <property type="project" value="UniProtKB-UniRule"/>
</dbReference>
<dbReference type="GO" id="GO:0070475">
    <property type="term" value="P:rRNA base methylation"/>
    <property type="evidence" value="ECO:0007669"/>
    <property type="project" value="UniProtKB-UniRule"/>
</dbReference>
<dbReference type="FunFam" id="1.10.150.170:FF:000001">
    <property type="entry name" value="Ribosomal RNA small subunit methyltransferase H"/>
    <property type="match status" value="1"/>
</dbReference>
<dbReference type="Gene3D" id="1.10.150.170">
    <property type="entry name" value="Putative methyltransferase TM0872, insert domain"/>
    <property type="match status" value="1"/>
</dbReference>
<dbReference type="Gene3D" id="3.40.50.150">
    <property type="entry name" value="Vaccinia Virus protein VP39"/>
    <property type="match status" value="1"/>
</dbReference>
<dbReference type="HAMAP" id="MF_01007">
    <property type="entry name" value="16SrRNA_methyltr_H"/>
    <property type="match status" value="1"/>
</dbReference>
<dbReference type="InterPro" id="IPR002903">
    <property type="entry name" value="RsmH"/>
</dbReference>
<dbReference type="InterPro" id="IPR023397">
    <property type="entry name" value="SAM-dep_MeTrfase_MraW_recog"/>
</dbReference>
<dbReference type="InterPro" id="IPR029063">
    <property type="entry name" value="SAM-dependent_MTases_sf"/>
</dbReference>
<dbReference type="NCBIfam" id="TIGR00006">
    <property type="entry name" value="16S rRNA (cytosine(1402)-N(4))-methyltransferase RsmH"/>
    <property type="match status" value="1"/>
</dbReference>
<dbReference type="PANTHER" id="PTHR11265:SF0">
    <property type="entry name" value="12S RRNA N4-METHYLCYTIDINE METHYLTRANSFERASE"/>
    <property type="match status" value="1"/>
</dbReference>
<dbReference type="PANTHER" id="PTHR11265">
    <property type="entry name" value="S-ADENOSYL-METHYLTRANSFERASE MRAW"/>
    <property type="match status" value="1"/>
</dbReference>
<dbReference type="Pfam" id="PF01795">
    <property type="entry name" value="Methyltransf_5"/>
    <property type="match status" value="1"/>
</dbReference>
<dbReference type="PIRSF" id="PIRSF004486">
    <property type="entry name" value="MraW"/>
    <property type="match status" value="1"/>
</dbReference>
<dbReference type="SUPFAM" id="SSF81799">
    <property type="entry name" value="Putative methyltransferase TM0872, insert domain"/>
    <property type="match status" value="1"/>
</dbReference>
<dbReference type="SUPFAM" id="SSF53335">
    <property type="entry name" value="S-adenosyl-L-methionine-dependent methyltransferases"/>
    <property type="match status" value="1"/>
</dbReference>
<evidence type="ECO:0000255" key="1">
    <source>
        <dbReference type="HAMAP-Rule" id="MF_01007"/>
    </source>
</evidence>
<evidence type="ECO:0000305" key="2"/>
<protein>
    <recommendedName>
        <fullName evidence="1">Ribosomal RNA small subunit methyltransferase H</fullName>
        <ecNumber evidence="1">2.1.1.199</ecNumber>
    </recommendedName>
    <alternativeName>
        <fullName evidence="1">16S rRNA m(4)C1402 methyltransferase</fullName>
    </alternativeName>
    <alternativeName>
        <fullName evidence="1">rRNA (cytosine-N(4)-)-methyltransferase RsmH</fullName>
    </alternativeName>
</protein>
<keyword id="KW-0963">Cytoplasm</keyword>
<keyword id="KW-0489">Methyltransferase</keyword>
<keyword id="KW-0698">rRNA processing</keyword>
<keyword id="KW-0949">S-adenosyl-L-methionine</keyword>
<keyword id="KW-0808">Transferase</keyword>
<name>RSMH_NEIG2</name>
<reference key="1">
    <citation type="journal article" date="2008" name="J. Bacteriol.">
        <title>Complete genome sequence of Neisseria gonorrhoeae NCCP11945.</title>
        <authorList>
            <person name="Chung G.T."/>
            <person name="Yoo J.S."/>
            <person name="Oh H.B."/>
            <person name="Lee Y.S."/>
            <person name="Cha S.H."/>
            <person name="Kim S.J."/>
            <person name="Yoo C.K."/>
        </authorList>
    </citation>
    <scope>NUCLEOTIDE SEQUENCE [LARGE SCALE GENOMIC DNA]</scope>
    <source>
        <strain>NCCP11945</strain>
    </source>
</reference>
<comment type="function">
    <text evidence="1">Specifically methylates the N4 position of cytidine in position 1402 (C1402) of 16S rRNA.</text>
</comment>
<comment type="catalytic activity">
    <reaction evidence="1">
        <text>cytidine(1402) in 16S rRNA + S-adenosyl-L-methionine = N(4)-methylcytidine(1402) in 16S rRNA + S-adenosyl-L-homocysteine + H(+)</text>
        <dbReference type="Rhea" id="RHEA:42928"/>
        <dbReference type="Rhea" id="RHEA-COMP:10286"/>
        <dbReference type="Rhea" id="RHEA-COMP:10287"/>
        <dbReference type="ChEBI" id="CHEBI:15378"/>
        <dbReference type="ChEBI" id="CHEBI:57856"/>
        <dbReference type="ChEBI" id="CHEBI:59789"/>
        <dbReference type="ChEBI" id="CHEBI:74506"/>
        <dbReference type="ChEBI" id="CHEBI:82748"/>
        <dbReference type="EC" id="2.1.1.199"/>
    </reaction>
</comment>
<comment type="subcellular location">
    <subcellularLocation>
        <location evidence="1">Cytoplasm</location>
    </subcellularLocation>
</comment>
<comment type="similarity">
    <text evidence="1">Belongs to the methyltransferase superfamily. RsmH family.</text>
</comment>
<comment type="sequence caution" evidence="2">
    <conflict type="erroneous initiation">
        <sequence resource="EMBL-CDS" id="ACF30473"/>
    </conflict>
</comment>
<gene>
    <name evidence="1" type="primary">rsmH</name>
    <name type="synonym">mraW</name>
    <name type="ordered locus">NGK_1834</name>
</gene>
<sequence length="318" mass="34843">MSGAESYRHITVLLNEAVDALAVREDGVYVDGTFGRGGHSRLILSRLGDAGRLIVFDKDPQAIAVAEELARSDKRVGVVHGGFASFQTALDGLGIGKVDGALFDLGISSPQIDDGSRGFSFRFDAPLDMRMDTTRGMSAAEWIAVASEQDLHEVIKNYGEERFSRQIVRAIVAQRAESPIDTTRKLAQIVAQNVRTRERGQDPATRTFQAIRIFINRELEEVGAVLPQVMCRLKEGGRLAVIAFHSLEDRIVKQFVKKYSQHEPLPSWAAVREADLPEPPLKIVGRALKPGEAEIAANPRARSAVLRVAERTAGPIPE</sequence>